<comment type="function">
    <text evidence="1">Motor-binding component of the dynactin complex which assists cytoplasmic dynein by increasing its processivity and by regulation of its cargo binding (By similarity). The dynactin complex is required for the spindle translocation late in anaphase and is involved in a cell wall synthesis checkpoint.</text>
</comment>
<comment type="subunit">
    <text evidence="1">Component of the dynactin complex composed of at least ARP1, JNM1, NIP100 and ARP10. Dynactin comprises a short rod of the ARP1 filament attached to ARP10 at its pointed-end and probably associated with the capping protein at its barbed-end. The rod is implicated in dynein cargo binding. A sidearm formed by NIP100 projects from the ARP1 filament and is implicated in motor binding (By similarity).</text>
</comment>
<comment type="interaction">
    <interactant intactId="EBI-12049">
        <id>P33420</id>
    </interactant>
    <interactant intactId="EBI-2920">
        <id>P38696</id>
        <label>ARP1</label>
    </interactant>
    <organismsDiffer>false</organismsDiffer>
    <experiments>4</experiments>
</comment>
<comment type="interaction">
    <interactant intactId="EBI-12049">
        <id>P33420</id>
    </interactant>
    <interactant intactId="EBI-9415">
        <id>P36224</id>
        <label>JNM1</label>
    </interactant>
    <organismsDiffer>false</organismsDiffer>
    <experiments>2</experiments>
</comment>
<comment type="subcellular location">
    <subcellularLocation>
        <location evidence="5">Cytoplasm</location>
    </subcellularLocation>
    <subcellularLocation>
        <location evidence="1">Cytoplasm</location>
        <location evidence="1">Cytoskeleton</location>
    </subcellularLocation>
    <subcellularLocation>
        <location evidence="5">Cytoplasm</location>
        <location evidence="5">Cytoskeleton</location>
        <location evidence="5">Spindle pole</location>
    </subcellularLocation>
    <text>Localizes to spindle poles throughout the cell cycle.</text>
</comment>
<comment type="miscellaneous">
    <text evidence="4">Present with 238 molecules/cell in log phase SD medium.</text>
</comment>
<protein>
    <recommendedName>
        <fullName>Protein NIP100</fullName>
    </recommendedName>
    <alternativeName>
        <fullName>Protein NIP80</fullName>
    </alternativeName>
</protein>
<gene>
    <name type="primary">NIP100</name>
    <name type="synonym">NIP80</name>
    <name type="ordered locus">YPL174C</name>
</gene>
<keyword id="KW-0175">Coiled coil</keyword>
<keyword id="KW-0963">Cytoplasm</keyword>
<keyword id="KW-0206">Cytoskeleton</keyword>
<keyword id="KW-0243">Dynein</keyword>
<keyword id="KW-0493">Microtubule</keyword>
<keyword id="KW-1185">Reference proteome</keyword>
<proteinExistence type="evidence at protein level"/>
<accession>P33420</accession>
<accession>D6W3J4</accession>
<accession>Q08917</accession>
<dbReference type="EMBL" id="X72227">
    <property type="protein sequence ID" value="CAA51030.1"/>
    <property type="molecule type" value="Genomic_DNA"/>
</dbReference>
<dbReference type="EMBL" id="Z73530">
    <property type="protein sequence ID" value="CAA97881.1"/>
    <property type="molecule type" value="Genomic_DNA"/>
</dbReference>
<dbReference type="EMBL" id="BK006949">
    <property type="protein sequence ID" value="DAA11260.1"/>
    <property type="molecule type" value="Genomic_DNA"/>
</dbReference>
<dbReference type="PIR" id="S65186">
    <property type="entry name" value="S65186"/>
</dbReference>
<dbReference type="RefSeq" id="NP_015151.1">
    <property type="nucleotide sequence ID" value="NM_001183988.1"/>
</dbReference>
<dbReference type="SMR" id="P33420"/>
<dbReference type="BioGRID" id="36009">
    <property type="interactions" value="565"/>
</dbReference>
<dbReference type="ComplexPortal" id="CPX-1805">
    <property type="entry name" value="Dynactin complex"/>
</dbReference>
<dbReference type="DIP" id="DIP-1473N"/>
<dbReference type="FunCoup" id="P33420">
    <property type="interactions" value="143"/>
</dbReference>
<dbReference type="IntAct" id="P33420">
    <property type="interactions" value="17"/>
</dbReference>
<dbReference type="MINT" id="P33420"/>
<dbReference type="STRING" id="4932.YPL174C"/>
<dbReference type="GlyGen" id="P33420">
    <property type="glycosylation" value="2 sites, 1 O-linked glycan (2 sites)"/>
</dbReference>
<dbReference type="iPTMnet" id="P33420"/>
<dbReference type="PaxDb" id="4932-YPL174C"/>
<dbReference type="PeptideAtlas" id="P33420"/>
<dbReference type="EnsemblFungi" id="YPL174C_mRNA">
    <property type="protein sequence ID" value="YPL174C"/>
    <property type="gene ID" value="YPL174C"/>
</dbReference>
<dbReference type="GeneID" id="855929"/>
<dbReference type="KEGG" id="sce:YPL174C"/>
<dbReference type="AGR" id="SGD:S000006095"/>
<dbReference type="SGD" id="S000006095">
    <property type="gene designation" value="NIP100"/>
</dbReference>
<dbReference type="VEuPathDB" id="FungiDB:YPL174C"/>
<dbReference type="eggNOG" id="KOG4568">
    <property type="taxonomic scope" value="Eukaryota"/>
</dbReference>
<dbReference type="HOGENOM" id="CLU_018256_0_0_1"/>
<dbReference type="InParanoid" id="P33420"/>
<dbReference type="OMA" id="LWHERDH"/>
<dbReference type="OrthoDB" id="2130750at2759"/>
<dbReference type="BioCyc" id="YEAST:G3O-34069-MONOMER"/>
<dbReference type="BioGRID-ORCS" id="855929">
    <property type="hits" value="1 hit in 10 CRISPR screens"/>
</dbReference>
<dbReference type="CD-CODE" id="876000F7">
    <property type="entry name" value="Centrosome"/>
</dbReference>
<dbReference type="PRO" id="PR:P33420"/>
<dbReference type="Proteomes" id="UP000002311">
    <property type="component" value="Chromosome XVI"/>
</dbReference>
<dbReference type="RNAct" id="P33420">
    <property type="molecule type" value="protein"/>
</dbReference>
<dbReference type="GO" id="GO:0015629">
    <property type="term" value="C:actin cytoskeleton"/>
    <property type="evidence" value="ECO:0000303"/>
    <property type="project" value="ComplexPortal"/>
</dbReference>
<dbReference type="GO" id="GO:0051286">
    <property type="term" value="C:cell tip"/>
    <property type="evidence" value="ECO:0000318"/>
    <property type="project" value="GO_Central"/>
</dbReference>
<dbReference type="GO" id="GO:0005737">
    <property type="term" value="C:cytoplasm"/>
    <property type="evidence" value="ECO:0007669"/>
    <property type="project" value="UniProtKB-SubCell"/>
</dbReference>
<dbReference type="GO" id="GO:0005869">
    <property type="term" value="C:dynactin complex"/>
    <property type="evidence" value="ECO:0000314"/>
    <property type="project" value="SGD"/>
</dbReference>
<dbReference type="GO" id="GO:0030286">
    <property type="term" value="C:dynein complex"/>
    <property type="evidence" value="ECO:0007669"/>
    <property type="project" value="UniProtKB-KW"/>
</dbReference>
<dbReference type="GO" id="GO:0005874">
    <property type="term" value="C:microtubule"/>
    <property type="evidence" value="ECO:0007669"/>
    <property type="project" value="UniProtKB-KW"/>
</dbReference>
<dbReference type="GO" id="GO:0005875">
    <property type="term" value="C:microtubule associated complex"/>
    <property type="evidence" value="ECO:0000318"/>
    <property type="project" value="GO_Central"/>
</dbReference>
<dbReference type="GO" id="GO:0005819">
    <property type="term" value="C:spindle"/>
    <property type="evidence" value="ECO:0000318"/>
    <property type="project" value="GO_Central"/>
</dbReference>
<dbReference type="GO" id="GO:0000922">
    <property type="term" value="C:spindle pole"/>
    <property type="evidence" value="ECO:0007669"/>
    <property type="project" value="UniProtKB-SubCell"/>
</dbReference>
<dbReference type="GO" id="GO:0005816">
    <property type="term" value="C:spindle pole body"/>
    <property type="evidence" value="ECO:0000318"/>
    <property type="project" value="GO_Central"/>
</dbReference>
<dbReference type="GO" id="GO:0008017">
    <property type="term" value="F:microtubule binding"/>
    <property type="evidence" value="ECO:0000250"/>
    <property type="project" value="SGD"/>
</dbReference>
<dbReference type="GO" id="GO:0030048">
    <property type="term" value="P:actin filament-based movement"/>
    <property type="evidence" value="ECO:0000303"/>
    <property type="project" value="ComplexPortal"/>
</dbReference>
<dbReference type="GO" id="GO:0000132">
    <property type="term" value="P:establishment of mitotic spindle orientation"/>
    <property type="evidence" value="ECO:0000315"/>
    <property type="project" value="SGD"/>
</dbReference>
<dbReference type="GO" id="GO:0000743">
    <property type="term" value="P:nuclear migration involved in conjugation with cellular fusion"/>
    <property type="evidence" value="ECO:0000318"/>
    <property type="project" value="GO_Central"/>
</dbReference>
<dbReference type="FunFam" id="2.30.30.190:FF:000023">
    <property type="entry name" value="Nip100p"/>
    <property type="match status" value="1"/>
</dbReference>
<dbReference type="Gene3D" id="2.30.30.190">
    <property type="entry name" value="CAP Gly-rich-like domain"/>
    <property type="match status" value="1"/>
</dbReference>
<dbReference type="InterPro" id="IPR036859">
    <property type="entry name" value="CAP-Gly_dom_sf"/>
</dbReference>
<dbReference type="InterPro" id="IPR000938">
    <property type="entry name" value="CAP-Gly_domain"/>
</dbReference>
<dbReference type="PANTHER" id="PTHR18916">
    <property type="entry name" value="DYNACTIN 1-RELATED MICROTUBULE-BINDING"/>
    <property type="match status" value="1"/>
</dbReference>
<dbReference type="PANTHER" id="PTHR18916:SF6">
    <property type="entry name" value="DYNACTIN SUBUNIT 1"/>
    <property type="match status" value="1"/>
</dbReference>
<dbReference type="Pfam" id="PF01302">
    <property type="entry name" value="CAP_GLY"/>
    <property type="match status" value="1"/>
</dbReference>
<dbReference type="SMART" id="SM01052">
    <property type="entry name" value="CAP_GLY"/>
    <property type="match status" value="1"/>
</dbReference>
<dbReference type="SUPFAM" id="SSF74924">
    <property type="entry name" value="Cap-Gly domain"/>
    <property type="match status" value="1"/>
</dbReference>
<dbReference type="PROSITE" id="PS00845">
    <property type="entry name" value="CAP_GLY_1"/>
    <property type="match status" value="1"/>
</dbReference>
<dbReference type="PROSITE" id="PS50245">
    <property type="entry name" value="CAP_GLY_2"/>
    <property type="match status" value="1"/>
</dbReference>
<feature type="chain" id="PRO_0000083525" description="Protein NIP100">
    <location>
        <begin position="1"/>
        <end position="868"/>
    </location>
</feature>
<feature type="domain" description="CAP-Gly" evidence="3">
    <location>
        <begin position="34"/>
        <end position="84"/>
    </location>
</feature>
<feature type="coiled-coil region" evidence="2">
    <location>
        <begin position="101"/>
        <end position="175"/>
    </location>
</feature>
<feature type="coiled-coil region" evidence="2">
    <location>
        <begin position="207"/>
        <end position="375"/>
    </location>
</feature>
<feature type="coiled-coil region" evidence="2">
    <location>
        <begin position="645"/>
        <end position="776"/>
    </location>
</feature>
<evidence type="ECO:0000250" key="1"/>
<evidence type="ECO:0000255" key="2"/>
<evidence type="ECO:0000255" key="3">
    <source>
        <dbReference type="PROSITE-ProRule" id="PRU00045"/>
    </source>
</evidence>
<evidence type="ECO:0000269" key="4">
    <source>
    </source>
</evidence>
<evidence type="ECO:0000269" key="5">
    <source>
    </source>
</evidence>
<reference key="1">
    <citation type="submission" date="1993-05" db="EMBL/GenBank/DDBJ databases">
        <authorList>
            <person name="Schlenstedt G."/>
            <person name="Silver P.A."/>
        </authorList>
    </citation>
    <scope>NUCLEOTIDE SEQUENCE [GENOMIC DNA]</scope>
</reference>
<reference key="2">
    <citation type="submission" date="1997-04" db="EMBL/GenBank/DDBJ databases">
        <authorList>
            <person name="Silver P.A."/>
        </authorList>
    </citation>
    <scope>SEQUENCE REVISION</scope>
</reference>
<reference key="3">
    <citation type="journal article" date="1997" name="Nature">
        <title>The nucleotide sequence of Saccharomyces cerevisiae chromosome XVI.</title>
        <authorList>
            <person name="Bussey H."/>
            <person name="Storms R.K."/>
            <person name="Ahmed A."/>
            <person name="Albermann K."/>
            <person name="Allen E."/>
            <person name="Ansorge W."/>
            <person name="Araujo R."/>
            <person name="Aparicio A."/>
            <person name="Barrell B.G."/>
            <person name="Badcock K."/>
            <person name="Benes V."/>
            <person name="Botstein D."/>
            <person name="Bowman S."/>
            <person name="Brueckner M."/>
            <person name="Carpenter J."/>
            <person name="Cherry J.M."/>
            <person name="Chung E."/>
            <person name="Churcher C.M."/>
            <person name="Coster F."/>
            <person name="Davis K."/>
            <person name="Davis R.W."/>
            <person name="Dietrich F.S."/>
            <person name="Delius H."/>
            <person name="DiPaolo T."/>
            <person name="Dubois E."/>
            <person name="Duesterhoeft A."/>
            <person name="Duncan M."/>
            <person name="Floeth M."/>
            <person name="Fortin N."/>
            <person name="Friesen J.D."/>
            <person name="Fritz C."/>
            <person name="Goffeau A."/>
            <person name="Hall J."/>
            <person name="Hebling U."/>
            <person name="Heumann K."/>
            <person name="Hilbert H."/>
            <person name="Hillier L.W."/>
            <person name="Hunicke-Smith S."/>
            <person name="Hyman R.W."/>
            <person name="Johnston M."/>
            <person name="Kalman S."/>
            <person name="Kleine K."/>
            <person name="Komp C."/>
            <person name="Kurdi O."/>
            <person name="Lashkari D."/>
            <person name="Lew H."/>
            <person name="Lin A."/>
            <person name="Lin D."/>
            <person name="Louis E.J."/>
            <person name="Marathe R."/>
            <person name="Messenguy F."/>
            <person name="Mewes H.-W."/>
            <person name="Mirtipati S."/>
            <person name="Moestl D."/>
            <person name="Mueller-Auer S."/>
            <person name="Namath A."/>
            <person name="Nentwich U."/>
            <person name="Oefner P."/>
            <person name="Pearson D."/>
            <person name="Petel F.X."/>
            <person name="Pohl T.M."/>
            <person name="Purnelle B."/>
            <person name="Rajandream M.A."/>
            <person name="Rechmann S."/>
            <person name="Rieger M."/>
            <person name="Riles L."/>
            <person name="Roberts D."/>
            <person name="Schaefer M."/>
            <person name="Scharfe M."/>
            <person name="Scherens B."/>
            <person name="Schramm S."/>
            <person name="Schroeder M."/>
            <person name="Sdicu A.-M."/>
            <person name="Tettelin H."/>
            <person name="Urrestarazu L.A."/>
            <person name="Ushinsky S."/>
            <person name="Vierendeels F."/>
            <person name="Vissers S."/>
            <person name="Voss H."/>
            <person name="Walsh S.V."/>
            <person name="Wambutt R."/>
            <person name="Wang Y."/>
            <person name="Wedler E."/>
            <person name="Wedler H."/>
            <person name="Winnett E."/>
            <person name="Zhong W.-W."/>
            <person name="Zollner A."/>
            <person name="Vo D.H."/>
            <person name="Hani J."/>
        </authorList>
    </citation>
    <scope>NUCLEOTIDE SEQUENCE [LARGE SCALE GENOMIC DNA]</scope>
    <source>
        <strain>ATCC 204508 / S288c</strain>
    </source>
</reference>
<reference key="4">
    <citation type="journal article" date="2014" name="G3 (Bethesda)">
        <title>The reference genome sequence of Saccharomyces cerevisiae: Then and now.</title>
        <authorList>
            <person name="Engel S.R."/>
            <person name="Dietrich F.S."/>
            <person name="Fisk D.G."/>
            <person name="Binkley G."/>
            <person name="Balakrishnan R."/>
            <person name="Costanzo M.C."/>
            <person name="Dwight S.S."/>
            <person name="Hitz B.C."/>
            <person name="Karra K."/>
            <person name="Nash R.S."/>
            <person name="Weng S."/>
            <person name="Wong E.D."/>
            <person name="Lloyd P."/>
            <person name="Skrzypek M.S."/>
            <person name="Miyasato S.R."/>
            <person name="Simison M."/>
            <person name="Cherry J.M."/>
        </authorList>
    </citation>
    <scope>GENOME REANNOTATION</scope>
    <source>
        <strain>ATCC 204508 / S288c</strain>
    </source>
</reference>
<reference key="5">
    <citation type="journal article" date="1998" name="Mol. Biol. Cell">
        <title>The yeast dynactin complex is involved in partitioning the mitotic spindle between mother and daughter cells during anaphase B.</title>
        <authorList>
            <person name="Kahana J.A."/>
            <person name="Schlenstedt G."/>
            <person name="Evanchuk D.M."/>
            <person name="Geiser J.R."/>
            <person name="Hoyt M.A."/>
            <person name="Silver P.A."/>
        </authorList>
    </citation>
    <scope>IDENTIFICATION IN THE DYNACTIN COMPLEX</scope>
    <scope>SUBCELLULAR LOCATION</scope>
</reference>
<reference key="6">
    <citation type="journal article" date="2003" name="Nature">
        <title>Global analysis of protein expression in yeast.</title>
        <authorList>
            <person name="Ghaemmaghami S."/>
            <person name="Huh W.-K."/>
            <person name="Bower K."/>
            <person name="Howson R.W."/>
            <person name="Belle A."/>
            <person name="Dephoure N."/>
            <person name="O'Shea E.K."/>
            <person name="Weissman J.S."/>
        </authorList>
    </citation>
    <scope>LEVEL OF PROTEIN EXPRESSION [LARGE SCALE ANALYSIS]</scope>
</reference>
<name>NIP80_YEAST</name>
<organism>
    <name type="scientific">Saccharomyces cerevisiae (strain ATCC 204508 / S288c)</name>
    <name type="common">Baker's yeast</name>
    <dbReference type="NCBI Taxonomy" id="559292"/>
    <lineage>
        <taxon>Eukaryota</taxon>
        <taxon>Fungi</taxon>
        <taxon>Dikarya</taxon>
        <taxon>Ascomycota</taxon>
        <taxon>Saccharomycotina</taxon>
        <taxon>Saccharomycetes</taxon>
        <taxon>Saccharomycetales</taxon>
        <taxon>Saccharomycetaceae</taxon>
        <taxon>Saccharomyces</taxon>
    </lineage>
</organism>
<sequence>MRNAGVQVDTNMQKISLQDTVLVNEMKGRVKFIGETQFAKGIWYGIELDKPLGKNDGSANGIRYFDIDLKKANSNGGYYGLFCKKDTLQFYKPDDDEHSLLNGNAAQETIKNLQVKCESLASKLNKIKIENHELKTSVEKLSTNETVLLSKISRLDKLVKELKVENGNMKTHLDNFNHLLDASDSVMAPDLDKGTLLERSHLLQGLLDQTKLSYDKAMKVQEDLLEENTQLLEENAVLSKKISDLGLQLQQTNNTIGDLALQIEAQSKSSNIVDKLTNDNILLTSNIKALNNELEELQAKEKLDENLRITYEQLEQELRLQLSNLQSALENEKEIAGTYIEENSRLKATLESIEAKTSHKFQSLELKVNTLQEELYQNKLLKKFYQIYEPFAQPHLAALSSQLQYLAEVIESENFGKLENIEIHIILKVLSSISYALHIYTIKNTPDHLETTLQCFKVNIAPISMWLSEFLQRKFSSKQETAFSICQFLEDNKFLDKDVTLILKILHPILETTVPKLLAFLRTNSNFNDNDTLCLIGSLYERSLSLIARIDKLIGKEEISKQDNRLFLYPSCDITLSSILTILFSDALFLRQDYKRISSLKKLEVFFQGIESLLENITIFPEQPSQQTSDSESQCNIKEGNFSNSLLSDRLNEENIRLKEVLVQKENMLTELETKIKIIIGRDLERKTLEENIKTLKVELNNKNEENCGKTEILNKLKEENFNLVNRLKNMELKLYQIKDNNTLNKIYLDREKVDRVNLVSEIMELRETIRRQIKEQKRVSIDFSWLDELPAVENKQPFKEHINHSLDTLGIEMFNFVSTSRILDLKLDQPLAEDELWHERDHSYISYLKRKRKNIRLKSQNVVTYYK</sequence>